<keyword id="KW-0067">ATP-binding</keyword>
<keyword id="KW-0520">NAD</keyword>
<keyword id="KW-0547">Nucleotide-binding</keyword>
<keyword id="KW-0548">Nucleotidyltransferase</keyword>
<keyword id="KW-0662">Pyridine nucleotide biosynthesis</keyword>
<keyword id="KW-0808">Transferase</keyword>
<evidence type="ECO:0000255" key="1">
    <source>
        <dbReference type="HAMAP-Rule" id="MF_00244"/>
    </source>
</evidence>
<dbReference type="EC" id="2.7.7.18" evidence="1"/>
<dbReference type="EMBL" id="CP000975">
    <property type="protein sequence ID" value="ACD83415.1"/>
    <property type="molecule type" value="Genomic_DNA"/>
</dbReference>
<dbReference type="RefSeq" id="WP_012463697.1">
    <property type="nucleotide sequence ID" value="NC_010794.1"/>
</dbReference>
<dbReference type="SMR" id="B3DVR2"/>
<dbReference type="STRING" id="481448.Minf_1361"/>
<dbReference type="KEGG" id="min:Minf_1361"/>
<dbReference type="eggNOG" id="COG1057">
    <property type="taxonomic scope" value="Bacteria"/>
</dbReference>
<dbReference type="HOGENOM" id="CLU_069765_3_1_0"/>
<dbReference type="OrthoDB" id="5295945at2"/>
<dbReference type="UniPathway" id="UPA00253">
    <property type="reaction ID" value="UER00332"/>
</dbReference>
<dbReference type="Proteomes" id="UP000009149">
    <property type="component" value="Chromosome"/>
</dbReference>
<dbReference type="GO" id="GO:0005524">
    <property type="term" value="F:ATP binding"/>
    <property type="evidence" value="ECO:0007669"/>
    <property type="project" value="UniProtKB-KW"/>
</dbReference>
<dbReference type="GO" id="GO:0004515">
    <property type="term" value="F:nicotinate-nucleotide adenylyltransferase activity"/>
    <property type="evidence" value="ECO:0007669"/>
    <property type="project" value="UniProtKB-UniRule"/>
</dbReference>
<dbReference type="GO" id="GO:0009435">
    <property type="term" value="P:NAD biosynthetic process"/>
    <property type="evidence" value="ECO:0007669"/>
    <property type="project" value="UniProtKB-UniRule"/>
</dbReference>
<dbReference type="CDD" id="cd02165">
    <property type="entry name" value="NMNAT"/>
    <property type="match status" value="1"/>
</dbReference>
<dbReference type="Gene3D" id="3.40.50.620">
    <property type="entry name" value="HUPs"/>
    <property type="match status" value="1"/>
</dbReference>
<dbReference type="HAMAP" id="MF_00244">
    <property type="entry name" value="NaMN_adenylyltr"/>
    <property type="match status" value="1"/>
</dbReference>
<dbReference type="InterPro" id="IPR004821">
    <property type="entry name" value="Cyt_trans-like"/>
</dbReference>
<dbReference type="InterPro" id="IPR005248">
    <property type="entry name" value="NadD/NMNAT"/>
</dbReference>
<dbReference type="InterPro" id="IPR014729">
    <property type="entry name" value="Rossmann-like_a/b/a_fold"/>
</dbReference>
<dbReference type="NCBIfam" id="TIGR00125">
    <property type="entry name" value="cyt_tran_rel"/>
    <property type="match status" value="1"/>
</dbReference>
<dbReference type="NCBIfam" id="TIGR00482">
    <property type="entry name" value="nicotinate (nicotinamide) nucleotide adenylyltransferase"/>
    <property type="match status" value="1"/>
</dbReference>
<dbReference type="NCBIfam" id="NF000840">
    <property type="entry name" value="PRK00071.1-3"/>
    <property type="match status" value="1"/>
</dbReference>
<dbReference type="PANTHER" id="PTHR39321">
    <property type="entry name" value="NICOTINATE-NUCLEOTIDE ADENYLYLTRANSFERASE-RELATED"/>
    <property type="match status" value="1"/>
</dbReference>
<dbReference type="PANTHER" id="PTHR39321:SF3">
    <property type="entry name" value="PHOSPHOPANTETHEINE ADENYLYLTRANSFERASE"/>
    <property type="match status" value="1"/>
</dbReference>
<dbReference type="Pfam" id="PF01467">
    <property type="entry name" value="CTP_transf_like"/>
    <property type="match status" value="1"/>
</dbReference>
<dbReference type="SUPFAM" id="SSF52374">
    <property type="entry name" value="Nucleotidylyl transferase"/>
    <property type="match status" value="1"/>
</dbReference>
<proteinExistence type="inferred from homology"/>
<accession>B3DVR2</accession>
<feature type="chain" id="PRO_1000125356" description="Probable nicotinate-nucleotide adenylyltransferase">
    <location>
        <begin position="1"/>
        <end position="204"/>
    </location>
</feature>
<gene>
    <name evidence="1" type="primary">nadD</name>
    <name type="ordered locus">Minf_1361</name>
</gene>
<name>NADD_METI4</name>
<comment type="function">
    <text evidence="1">Catalyzes the reversible adenylation of nicotinate mononucleotide (NaMN) to nicotinic acid adenine dinucleotide (NaAD).</text>
</comment>
<comment type="catalytic activity">
    <reaction evidence="1">
        <text>nicotinate beta-D-ribonucleotide + ATP + H(+) = deamido-NAD(+) + diphosphate</text>
        <dbReference type="Rhea" id="RHEA:22860"/>
        <dbReference type="ChEBI" id="CHEBI:15378"/>
        <dbReference type="ChEBI" id="CHEBI:30616"/>
        <dbReference type="ChEBI" id="CHEBI:33019"/>
        <dbReference type="ChEBI" id="CHEBI:57502"/>
        <dbReference type="ChEBI" id="CHEBI:58437"/>
        <dbReference type="EC" id="2.7.7.18"/>
    </reaction>
</comment>
<comment type="pathway">
    <text evidence="1">Cofactor biosynthesis; NAD(+) biosynthesis; deamido-NAD(+) from nicotinate D-ribonucleotide: step 1/1.</text>
</comment>
<comment type="similarity">
    <text evidence="1">Belongs to the NadD family.</text>
</comment>
<organism>
    <name type="scientific">Methylacidiphilum infernorum (isolate V4)</name>
    <name type="common">Methylokorus infernorum (strain V4)</name>
    <dbReference type="NCBI Taxonomy" id="481448"/>
    <lineage>
        <taxon>Bacteria</taxon>
        <taxon>Pseudomonadati</taxon>
        <taxon>Verrucomicrobiota</taxon>
        <taxon>Methylacidiphilae</taxon>
        <taxon>Methylacidiphilales</taxon>
        <taxon>Methylacidiphilaceae</taxon>
        <taxon>Methylacidiphilum (ex Ratnadevi et al. 2023)</taxon>
    </lineage>
</organism>
<sequence length="204" mass="23913">MIKKTTSFRLAIFGGSFDPIHYGHLICAMDCLEQISLNKIIFMPCSRSPFKKQNPVASALQRLEMIQLAIKPFKNFEVSSFEVQSPAPSYSIRTVQEFHKLYPHAELFWIIGSDQVPGLPRWKDYAELIQIVKFIVVSRSNYYPYEKRDYLVPLPKIRYVDISSTEIRERVKKELPIFHLLPQAVFQYIKENSIYIPNRTVHEK</sequence>
<protein>
    <recommendedName>
        <fullName evidence="1">Probable nicotinate-nucleotide adenylyltransferase</fullName>
        <ecNumber evidence="1">2.7.7.18</ecNumber>
    </recommendedName>
    <alternativeName>
        <fullName evidence="1">Deamido-NAD(+) diphosphorylase</fullName>
    </alternativeName>
    <alternativeName>
        <fullName evidence="1">Deamido-NAD(+) pyrophosphorylase</fullName>
    </alternativeName>
    <alternativeName>
        <fullName evidence="1">Nicotinate mononucleotide adenylyltransferase</fullName>
        <shortName evidence="1">NaMN adenylyltransferase</shortName>
    </alternativeName>
</protein>
<reference key="1">
    <citation type="journal article" date="2008" name="Biol. Direct">
        <title>Complete genome sequence of the extremely acidophilic methanotroph isolate V4, Methylacidiphilum infernorum, a representative of the bacterial phylum Verrucomicrobia.</title>
        <authorList>
            <person name="Hou S."/>
            <person name="Makarova K.S."/>
            <person name="Saw J.H."/>
            <person name="Senin P."/>
            <person name="Ly B.V."/>
            <person name="Zhou Z."/>
            <person name="Ren Y."/>
            <person name="Wang J."/>
            <person name="Galperin M.Y."/>
            <person name="Omelchenko M.V."/>
            <person name="Wolf Y.I."/>
            <person name="Yutin N."/>
            <person name="Koonin E.V."/>
            <person name="Stott M.B."/>
            <person name="Mountain B.W."/>
            <person name="Crowe M.A."/>
            <person name="Smirnova A.V."/>
            <person name="Dunfield P.F."/>
            <person name="Feng L."/>
            <person name="Wang L."/>
            <person name="Alam M."/>
        </authorList>
    </citation>
    <scope>NUCLEOTIDE SEQUENCE [LARGE SCALE GENOMIC DNA]</scope>
    <source>
        <strain>Isolate V4</strain>
    </source>
</reference>